<sequence>MAKLLLLHAPHVIPRFSSSSSRSLVSAAALYRRPLLVNPQFSHIGPRLHSPYNRRFSARAFDDSPASSAEMEKEKQEQLLDGVSGKKDEDYPTGEMEYENRNAWEIFVVKFRMLFAYPWQRVRKGSVLTMTLRGQISDQLKSRFNSGLSLPQLSENFVKAAYDPRIAGVYLHIDPLSCGWGKVEEIRRHILNFKKSGKFIVGYISICGLKEYYLGCACNELFAPPSAYSFLYGLTVQASFLGGVFEKVGIEPQVQRIGKYKSAGDQLSRKSISEENYEMLSVLLDNIYSNWLDGVSDATGKKREDVENFINQGVYEIEKLKEAGLIKDIRYDDEVITMLKERLGVEKDKKLPTVDYKKYSGVKKWTLGLTGGRDQIAIIRAGGSISRVKGPLSTPGSAIIAEQLIEKIRSVRESKKYKAAIIRIDSPGGDALASDLMWREIKLLAETKPVIASMSDVAASGGYYMAMAANAIVAENLTLTGSIGVVTARFTLAKLYEKIGFNKETISRGKYAELLGAEERPLKPEEAELFEKSAQHAYQLFRDKAALSRSMPVDKMEEVAQGRVWTGKDAHSRGLIDAVGGLSRAIAIAKQKANIPLNKKVTLVELSRPSTSLPDILSGIGSSVIGVDRTLKGLLDELTITEGVQARMDGIMFQQLGRDSLATPIIDMLKDYLSSLR</sequence>
<keyword id="KW-0150">Chloroplast</keyword>
<keyword id="KW-0378">Hydrolase</keyword>
<keyword id="KW-0472">Membrane</keyword>
<keyword id="KW-0934">Plastid</keyword>
<keyword id="KW-0645">Protease</keyword>
<keyword id="KW-1185">Reference proteome</keyword>
<keyword id="KW-0720">Serine protease</keyword>
<keyword id="KW-0346">Stress response</keyword>
<keyword id="KW-0793">Thylakoid</keyword>
<keyword id="KW-0809">Transit peptide</keyword>
<organism>
    <name type="scientific">Arabidopsis thaliana</name>
    <name type="common">Mouse-ear cress</name>
    <dbReference type="NCBI Taxonomy" id="3702"/>
    <lineage>
        <taxon>Eukaryota</taxon>
        <taxon>Viridiplantae</taxon>
        <taxon>Streptophyta</taxon>
        <taxon>Embryophyta</taxon>
        <taxon>Tracheophyta</taxon>
        <taxon>Spermatophyta</taxon>
        <taxon>Magnoliopsida</taxon>
        <taxon>eudicotyledons</taxon>
        <taxon>Gunneridae</taxon>
        <taxon>Pentapetalae</taxon>
        <taxon>rosids</taxon>
        <taxon>malvids</taxon>
        <taxon>Brassicales</taxon>
        <taxon>Brassicaceae</taxon>
        <taxon>Camelineae</taxon>
        <taxon>Arabidopsis</taxon>
    </lineage>
</organism>
<gene>
    <name type="primary">SPPA</name>
    <name type="synonym">SPPA1</name>
    <name type="ordered locus">At1g73990</name>
    <name type="ORF">F2P9.14</name>
</gene>
<dbReference type="EC" id="3.4.21.-"/>
<dbReference type="EMBL" id="AF114385">
    <property type="protein sequence ID" value="AAF24059.1"/>
    <property type="status" value="ALT_SEQ"/>
    <property type="molecule type" value="mRNA"/>
</dbReference>
<dbReference type="EMBL" id="AC016662">
    <property type="protein sequence ID" value="AAG52522.1"/>
    <property type="molecule type" value="Genomic_DNA"/>
</dbReference>
<dbReference type="EMBL" id="CP002684">
    <property type="protein sequence ID" value="AEE35535.1"/>
    <property type="molecule type" value="Genomic_DNA"/>
</dbReference>
<dbReference type="EMBL" id="BT000429">
    <property type="protein sequence ID" value="AAN17406.1"/>
    <property type="status" value="ALT_SEQ"/>
    <property type="molecule type" value="mRNA"/>
</dbReference>
<dbReference type="EMBL" id="BT003350">
    <property type="protein sequence ID" value="AAO29968.1"/>
    <property type="status" value="ALT_SEQ"/>
    <property type="molecule type" value="mRNA"/>
</dbReference>
<dbReference type="PIR" id="F96767">
    <property type="entry name" value="F96767"/>
</dbReference>
<dbReference type="RefSeq" id="NP_565077.2">
    <property type="nucleotide sequence ID" value="NM_106058.3"/>
</dbReference>
<dbReference type="SMR" id="Q9C9C0"/>
<dbReference type="FunCoup" id="Q9C9C0">
    <property type="interactions" value="175"/>
</dbReference>
<dbReference type="STRING" id="3702.Q9C9C0"/>
<dbReference type="MEROPS" id="S49.004"/>
<dbReference type="GlyGen" id="Q9C9C0">
    <property type="glycosylation" value="1 site"/>
</dbReference>
<dbReference type="iPTMnet" id="Q9C9C0"/>
<dbReference type="MetOSite" id="Q9C9C0"/>
<dbReference type="PaxDb" id="3702-AT1G73990.1"/>
<dbReference type="ProteomicsDB" id="232618"/>
<dbReference type="EnsemblPlants" id="AT1G73990.1">
    <property type="protein sequence ID" value="AT1G73990.1"/>
    <property type="gene ID" value="AT1G73990"/>
</dbReference>
<dbReference type="GeneID" id="843737"/>
<dbReference type="Gramene" id="AT1G73990.1">
    <property type="protein sequence ID" value="AT1G73990.1"/>
    <property type="gene ID" value="AT1G73990"/>
</dbReference>
<dbReference type="KEGG" id="ath:AT1G73990"/>
<dbReference type="Araport" id="AT1G73990"/>
<dbReference type="TAIR" id="AT1G73990">
    <property type="gene designation" value="SPPA"/>
</dbReference>
<dbReference type="eggNOG" id="ENOG502QQH5">
    <property type="taxonomic scope" value="Eukaryota"/>
</dbReference>
<dbReference type="HOGENOM" id="CLU_008856_0_1_1"/>
<dbReference type="InParanoid" id="Q9C9C0"/>
<dbReference type="OMA" id="KGQYLYC"/>
<dbReference type="OrthoDB" id="45421at2759"/>
<dbReference type="PhylomeDB" id="Q9C9C0"/>
<dbReference type="PRO" id="PR:Q9C9C0"/>
<dbReference type="Proteomes" id="UP000006548">
    <property type="component" value="Chromosome 1"/>
</dbReference>
<dbReference type="ExpressionAtlas" id="Q9C9C0">
    <property type="expression patterns" value="baseline and differential"/>
</dbReference>
<dbReference type="GO" id="GO:0009507">
    <property type="term" value="C:chloroplast"/>
    <property type="evidence" value="ECO:0007005"/>
    <property type="project" value="TAIR"/>
</dbReference>
<dbReference type="GO" id="GO:0009941">
    <property type="term" value="C:chloroplast envelope"/>
    <property type="evidence" value="ECO:0007005"/>
    <property type="project" value="TAIR"/>
</dbReference>
<dbReference type="GO" id="GO:0009570">
    <property type="term" value="C:chloroplast stroma"/>
    <property type="evidence" value="ECO:0007669"/>
    <property type="project" value="UniProtKB-SubCell"/>
</dbReference>
<dbReference type="GO" id="GO:0009534">
    <property type="term" value="C:chloroplast thylakoid"/>
    <property type="evidence" value="ECO:0007005"/>
    <property type="project" value="TAIR"/>
</dbReference>
<dbReference type="GO" id="GO:0009535">
    <property type="term" value="C:chloroplast thylakoid membrane"/>
    <property type="evidence" value="ECO:0000314"/>
    <property type="project" value="TAIR"/>
</dbReference>
<dbReference type="GO" id="GO:0005739">
    <property type="term" value="C:mitochondrion"/>
    <property type="evidence" value="ECO:0007005"/>
    <property type="project" value="TAIR"/>
</dbReference>
<dbReference type="GO" id="GO:0004252">
    <property type="term" value="F:serine-type endopeptidase activity"/>
    <property type="evidence" value="ECO:0000314"/>
    <property type="project" value="TAIR"/>
</dbReference>
<dbReference type="GO" id="GO:0006508">
    <property type="term" value="P:proteolysis"/>
    <property type="evidence" value="ECO:0000314"/>
    <property type="project" value="TAIR"/>
</dbReference>
<dbReference type="GO" id="GO:0006465">
    <property type="term" value="P:signal peptide processing"/>
    <property type="evidence" value="ECO:0007669"/>
    <property type="project" value="InterPro"/>
</dbReference>
<dbReference type="CDD" id="cd07018">
    <property type="entry name" value="S49_SppA_67K_type"/>
    <property type="match status" value="1"/>
</dbReference>
<dbReference type="CDD" id="cd07023">
    <property type="entry name" value="S49_Sppa_N_C"/>
    <property type="match status" value="1"/>
</dbReference>
<dbReference type="Gene3D" id="3.90.226.10">
    <property type="entry name" value="2-enoyl-CoA Hydratase, Chain A, domain 1"/>
    <property type="match status" value="3"/>
</dbReference>
<dbReference type="InterPro" id="IPR029045">
    <property type="entry name" value="ClpP/crotonase-like_dom_sf"/>
</dbReference>
<dbReference type="InterPro" id="IPR004634">
    <property type="entry name" value="Pept_S49_pIV"/>
</dbReference>
<dbReference type="InterPro" id="IPR004635">
    <property type="entry name" value="Pept_S49_SppA"/>
</dbReference>
<dbReference type="InterPro" id="IPR002142">
    <property type="entry name" value="Peptidase_S49"/>
</dbReference>
<dbReference type="InterPro" id="IPR047217">
    <property type="entry name" value="S49_SppA_67K_type_N"/>
</dbReference>
<dbReference type="InterPro" id="IPR047272">
    <property type="entry name" value="S49_SppA_C"/>
</dbReference>
<dbReference type="NCBIfam" id="TIGR00706">
    <property type="entry name" value="SppA_dom"/>
    <property type="match status" value="1"/>
</dbReference>
<dbReference type="PANTHER" id="PTHR33209:SF1">
    <property type="entry name" value="PEPTIDASE S49 DOMAIN-CONTAINING PROTEIN"/>
    <property type="match status" value="1"/>
</dbReference>
<dbReference type="PANTHER" id="PTHR33209">
    <property type="entry name" value="PROTEASE 4"/>
    <property type="match status" value="1"/>
</dbReference>
<dbReference type="Pfam" id="PF01343">
    <property type="entry name" value="Peptidase_S49"/>
    <property type="match status" value="2"/>
</dbReference>
<dbReference type="PIRSF" id="PIRSF001217">
    <property type="entry name" value="Protease_4_SppA"/>
    <property type="match status" value="1"/>
</dbReference>
<dbReference type="SUPFAM" id="SSF52096">
    <property type="entry name" value="ClpP/crotonase"/>
    <property type="match status" value="2"/>
</dbReference>
<proteinExistence type="evidence at transcript level"/>
<accession>Q9C9C0</accession>
<accession>Q8H187</accession>
<accession>Q9SEL8</accession>
<name>SPPA1_ARATH</name>
<feature type="transit peptide" description="Chloroplast" evidence="2">
    <location>
        <begin position="1"/>
        <end position="68"/>
    </location>
</feature>
<feature type="chain" id="PRO_0000422762" description="Serine protease SPPA, chloroplastic">
    <location>
        <begin position="69"/>
        <end position="677"/>
    </location>
</feature>
<feature type="region of interest" description="Disordered" evidence="3">
    <location>
        <begin position="63"/>
        <end position="94"/>
    </location>
</feature>
<feature type="compositionally biased region" description="Basic and acidic residues" evidence="3">
    <location>
        <begin position="70"/>
        <end position="90"/>
    </location>
</feature>
<feature type="active site" description="Nucleophile" evidence="1">
    <location>
        <position position="460"/>
    </location>
</feature>
<comment type="function">
    <text evidence="4 5">Serine protease that may be involved in the light-dependent degradation of antenna and photosystem II in chloroplasts. May function during high light acclimation in plastids.</text>
</comment>
<comment type="subcellular location">
    <subcellularLocation>
        <location evidence="4">Plastid</location>
        <location evidence="4">Chloroplast stroma</location>
    </subcellularLocation>
    <subcellularLocation>
        <location evidence="4">Plastid</location>
        <location evidence="4">Chloroplast thylakoid membrane</location>
    </subcellularLocation>
    <text>Mostly exposed to the stroma but behaves as an intrinsic membrane protein.</text>
</comment>
<comment type="induction">
    <text evidence="4">By high light.</text>
</comment>
<comment type="disruption phenotype">
    <text evidence="5">No visible phenotype under normal growth conditions, but mutant plants have altered response to long-term high-light acclimation conditions compared to wild-type.</text>
</comment>
<comment type="similarity">
    <text evidence="6">Belongs to the peptidase S49 family.</text>
</comment>
<comment type="sequence caution" evidence="6">
    <conflict type="miscellaneous discrepancy">
        <sequence resource="EMBL-CDS" id="AAF24059"/>
    </conflict>
    <text>Sequencing errors.</text>
</comment>
<comment type="sequence caution" evidence="6">
    <conflict type="miscellaneous discrepancy">
        <sequence resource="EMBL-CDS" id="AAN17406"/>
    </conflict>
    <text>Sequencing errors.</text>
</comment>
<comment type="sequence caution" evidence="6">
    <conflict type="miscellaneous discrepancy">
        <sequence resource="EMBL-CDS" id="AAO29968"/>
    </conflict>
    <text>Sequencing errors.</text>
</comment>
<reference key="1">
    <citation type="journal article" date="2001" name="J. Biol. Chem.">
        <title>Identification and characterization of SppA, a novel light-inducible chloroplast protease complex associated with thylakoid membranes.</title>
        <authorList>
            <person name="Lensch M."/>
            <person name="Herrmann R.G."/>
            <person name="Sokolenko A."/>
        </authorList>
    </citation>
    <scope>NUCLEOTIDE SEQUENCE [MRNA]</scope>
    <scope>FUNCTION</scope>
    <scope>SUBCELLULAR LOCATION</scope>
    <scope>TISSUE SPECIFICITY</scope>
    <scope>INDUCTION BY LIGHT</scope>
</reference>
<reference key="2">
    <citation type="journal article" date="2000" name="Nature">
        <title>Sequence and analysis of chromosome 1 of the plant Arabidopsis thaliana.</title>
        <authorList>
            <person name="Theologis A."/>
            <person name="Ecker J.R."/>
            <person name="Palm C.J."/>
            <person name="Federspiel N.A."/>
            <person name="Kaul S."/>
            <person name="White O."/>
            <person name="Alonso J."/>
            <person name="Altafi H."/>
            <person name="Araujo R."/>
            <person name="Bowman C.L."/>
            <person name="Brooks S.Y."/>
            <person name="Buehler E."/>
            <person name="Chan A."/>
            <person name="Chao Q."/>
            <person name="Chen H."/>
            <person name="Cheuk R.F."/>
            <person name="Chin C.W."/>
            <person name="Chung M.K."/>
            <person name="Conn L."/>
            <person name="Conway A.B."/>
            <person name="Conway A.R."/>
            <person name="Creasy T.H."/>
            <person name="Dewar K."/>
            <person name="Dunn P."/>
            <person name="Etgu P."/>
            <person name="Feldblyum T.V."/>
            <person name="Feng J.-D."/>
            <person name="Fong B."/>
            <person name="Fujii C.Y."/>
            <person name="Gill J.E."/>
            <person name="Goldsmith A.D."/>
            <person name="Haas B."/>
            <person name="Hansen N.F."/>
            <person name="Hughes B."/>
            <person name="Huizar L."/>
            <person name="Hunter J.L."/>
            <person name="Jenkins J."/>
            <person name="Johnson-Hopson C."/>
            <person name="Khan S."/>
            <person name="Khaykin E."/>
            <person name="Kim C.J."/>
            <person name="Koo H.L."/>
            <person name="Kremenetskaia I."/>
            <person name="Kurtz D.B."/>
            <person name="Kwan A."/>
            <person name="Lam B."/>
            <person name="Langin-Hooper S."/>
            <person name="Lee A."/>
            <person name="Lee J.M."/>
            <person name="Lenz C.A."/>
            <person name="Li J.H."/>
            <person name="Li Y.-P."/>
            <person name="Lin X."/>
            <person name="Liu S.X."/>
            <person name="Liu Z.A."/>
            <person name="Luros J.S."/>
            <person name="Maiti R."/>
            <person name="Marziali A."/>
            <person name="Militscher J."/>
            <person name="Miranda M."/>
            <person name="Nguyen M."/>
            <person name="Nierman W.C."/>
            <person name="Osborne B.I."/>
            <person name="Pai G."/>
            <person name="Peterson J."/>
            <person name="Pham P.K."/>
            <person name="Rizzo M."/>
            <person name="Rooney T."/>
            <person name="Rowley D."/>
            <person name="Sakano H."/>
            <person name="Salzberg S.L."/>
            <person name="Schwartz J.R."/>
            <person name="Shinn P."/>
            <person name="Southwick A.M."/>
            <person name="Sun H."/>
            <person name="Tallon L.J."/>
            <person name="Tambunga G."/>
            <person name="Toriumi M.J."/>
            <person name="Town C.D."/>
            <person name="Utterback T."/>
            <person name="Van Aken S."/>
            <person name="Vaysberg M."/>
            <person name="Vysotskaia V.S."/>
            <person name="Walker M."/>
            <person name="Wu D."/>
            <person name="Yu G."/>
            <person name="Fraser C.M."/>
            <person name="Venter J.C."/>
            <person name="Davis R.W."/>
        </authorList>
    </citation>
    <scope>NUCLEOTIDE SEQUENCE [LARGE SCALE GENOMIC DNA]</scope>
    <source>
        <strain>cv. Columbia</strain>
    </source>
</reference>
<reference key="3">
    <citation type="journal article" date="2017" name="Plant J.">
        <title>Araport11: a complete reannotation of the Arabidopsis thaliana reference genome.</title>
        <authorList>
            <person name="Cheng C.Y."/>
            <person name="Krishnakumar V."/>
            <person name="Chan A.P."/>
            <person name="Thibaud-Nissen F."/>
            <person name="Schobel S."/>
            <person name="Town C.D."/>
        </authorList>
    </citation>
    <scope>GENOME REANNOTATION</scope>
    <source>
        <strain>cv. Columbia</strain>
    </source>
</reference>
<reference key="4">
    <citation type="journal article" date="2003" name="Science">
        <title>Empirical analysis of transcriptional activity in the Arabidopsis genome.</title>
        <authorList>
            <person name="Yamada K."/>
            <person name="Lim J."/>
            <person name="Dale J.M."/>
            <person name="Chen H."/>
            <person name="Shinn P."/>
            <person name="Palm C.J."/>
            <person name="Southwick A.M."/>
            <person name="Wu H.C."/>
            <person name="Kim C.J."/>
            <person name="Nguyen M."/>
            <person name="Pham P.K."/>
            <person name="Cheuk R.F."/>
            <person name="Karlin-Newmann G."/>
            <person name="Liu S.X."/>
            <person name="Lam B."/>
            <person name="Sakano H."/>
            <person name="Wu T."/>
            <person name="Yu G."/>
            <person name="Miranda M."/>
            <person name="Quach H.L."/>
            <person name="Tripp M."/>
            <person name="Chang C.H."/>
            <person name="Lee J.M."/>
            <person name="Toriumi M.J."/>
            <person name="Chan M.M."/>
            <person name="Tang C.C."/>
            <person name="Onodera C.S."/>
            <person name="Deng J.M."/>
            <person name="Akiyama K."/>
            <person name="Ansari Y."/>
            <person name="Arakawa T."/>
            <person name="Banh J."/>
            <person name="Banno F."/>
            <person name="Bowser L."/>
            <person name="Brooks S.Y."/>
            <person name="Carninci P."/>
            <person name="Chao Q."/>
            <person name="Choy N."/>
            <person name="Enju A."/>
            <person name="Goldsmith A.D."/>
            <person name="Gurjal M."/>
            <person name="Hansen N.F."/>
            <person name="Hayashizaki Y."/>
            <person name="Johnson-Hopson C."/>
            <person name="Hsuan V.W."/>
            <person name="Iida K."/>
            <person name="Karnes M."/>
            <person name="Khan S."/>
            <person name="Koesema E."/>
            <person name="Ishida J."/>
            <person name="Jiang P.X."/>
            <person name="Jones T."/>
            <person name="Kawai J."/>
            <person name="Kamiya A."/>
            <person name="Meyers C."/>
            <person name="Nakajima M."/>
            <person name="Narusaka M."/>
            <person name="Seki M."/>
            <person name="Sakurai T."/>
            <person name="Satou M."/>
            <person name="Tamse R."/>
            <person name="Vaysberg M."/>
            <person name="Wallender E.K."/>
            <person name="Wong C."/>
            <person name="Yamamura Y."/>
            <person name="Yuan S."/>
            <person name="Shinozaki K."/>
            <person name="Davis R.W."/>
            <person name="Theologis A."/>
            <person name="Ecker J.R."/>
        </authorList>
    </citation>
    <scope>NUCLEOTIDE SEQUENCE [LARGE SCALE MRNA]</scope>
    <source>
        <strain>cv. Columbia</strain>
    </source>
</reference>
<reference key="5">
    <citation type="journal article" date="2009" name="J. Exp. Bot.">
        <title>Loss of chloroplast protease SPPA function alters high light acclimation processes in Arabidopsis thaliana L. (Heynh.).</title>
        <authorList>
            <person name="Wetzel C.M."/>
            <person name="Harmacek L.D."/>
            <person name="Yuan L.H."/>
            <person name="Wopereis J.L."/>
            <person name="Chubb R."/>
            <person name="Turini P."/>
        </authorList>
    </citation>
    <scope>FUNCTION</scope>
    <scope>DISRUPTION PHENOTYPE</scope>
</reference>
<evidence type="ECO:0000250" key="1"/>
<evidence type="ECO:0000255" key="2"/>
<evidence type="ECO:0000256" key="3">
    <source>
        <dbReference type="SAM" id="MobiDB-lite"/>
    </source>
</evidence>
<evidence type="ECO:0000269" key="4">
    <source>
    </source>
</evidence>
<evidence type="ECO:0000269" key="5">
    <source>
    </source>
</evidence>
<evidence type="ECO:0000305" key="6"/>
<protein>
    <recommendedName>
        <fullName>Serine protease SPPA, chloroplastic</fullName>
        <ecNumber>3.4.21.-</ecNumber>
    </recommendedName>
    <alternativeName>
        <fullName>Signal peptide peptidase SPPA</fullName>
    </alternativeName>
</protein>